<organism>
    <name type="scientific">Pseudomonas putida (strain ATCC 700007 / DSM 6899 / JCM 31910 / BCRC 17059 / LMG 24140 / F1)</name>
    <dbReference type="NCBI Taxonomy" id="351746"/>
    <lineage>
        <taxon>Bacteria</taxon>
        <taxon>Pseudomonadati</taxon>
        <taxon>Pseudomonadota</taxon>
        <taxon>Gammaproteobacteria</taxon>
        <taxon>Pseudomonadales</taxon>
        <taxon>Pseudomonadaceae</taxon>
        <taxon>Pseudomonas</taxon>
    </lineage>
</organism>
<proteinExistence type="inferred from homology"/>
<sequence>MSESAFAERIVHNLLDTDFYKLTMMQGVLHNYPDADVEWEFRCRNGEDLRPYLGEIRNQLERLGDLTLDDGQLAFLERISFLKPDFLRFLRLFRFNLRYVHVGIENDQLFLRLKGPWLHVILFEVPLLAIISEVRNRNLHPHMRLAEARDQLYRKFDWLRAHASDDELAELQVADFGTRRRFSSRVQEEVVRVLRDDFPGRFVGTSNVDLAWKLDIKPLGTMAHEWIMAHQQLGPRLIDSQIAALDCWVREYRGLLGIALTDCITMDAFLGDFDLYFAKLFDGLRHDSGEPVAWAEKAIAHYQKLGIDPMTKTLVFSDGLNLTRSLEIFRALRGRINVSFGIGTNLTCDIPGVAPMSIVLKMTDCNGAPVAKISDEAAKTQCRDENFVAYMRHVFKVPSKE</sequence>
<keyword id="KW-0436">Ligase</keyword>
<keyword id="KW-0597">Phosphoprotein</keyword>
<keyword id="KW-0662">Pyridine nucleotide biosynthesis</keyword>
<reference key="1">
    <citation type="submission" date="2007-05" db="EMBL/GenBank/DDBJ databases">
        <title>Complete sequence of Pseudomonas putida F1.</title>
        <authorList>
            <consortium name="US DOE Joint Genome Institute"/>
            <person name="Copeland A."/>
            <person name="Lucas S."/>
            <person name="Lapidus A."/>
            <person name="Barry K."/>
            <person name="Detter J.C."/>
            <person name="Glavina del Rio T."/>
            <person name="Hammon N."/>
            <person name="Israni S."/>
            <person name="Dalin E."/>
            <person name="Tice H."/>
            <person name="Pitluck S."/>
            <person name="Chain P."/>
            <person name="Malfatti S."/>
            <person name="Shin M."/>
            <person name="Vergez L."/>
            <person name="Schmutz J."/>
            <person name="Larimer F."/>
            <person name="Land M."/>
            <person name="Hauser L."/>
            <person name="Kyrpides N."/>
            <person name="Lykidis A."/>
            <person name="Parales R."/>
            <person name="Richardson P."/>
        </authorList>
    </citation>
    <scope>NUCLEOTIDE SEQUENCE [LARGE SCALE GENOMIC DNA]</scope>
    <source>
        <strain>ATCC 700007 / DSM 6899 / JCM 31910 / BCRC 17059 / LMG 24140 / F1</strain>
    </source>
</reference>
<name>PNCB_PSEP1</name>
<accession>A5W9Q6</accession>
<dbReference type="EC" id="6.3.4.21" evidence="1"/>
<dbReference type="EMBL" id="CP000712">
    <property type="protein sequence ID" value="ABQ80866.1"/>
    <property type="molecule type" value="Genomic_DNA"/>
</dbReference>
<dbReference type="SMR" id="A5W9Q6"/>
<dbReference type="KEGG" id="ppf:Pput_4746"/>
<dbReference type="eggNOG" id="COG1488">
    <property type="taxonomic scope" value="Bacteria"/>
</dbReference>
<dbReference type="HOGENOM" id="CLU_030991_1_0_6"/>
<dbReference type="UniPathway" id="UPA00253">
    <property type="reaction ID" value="UER00457"/>
</dbReference>
<dbReference type="GO" id="GO:0005829">
    <property type="term" value="C:cytosol"/>
    <property type="evidence" value="ECO:0007669"/>
    <property type="project" value="TreeGrafter"/>
</dbReference>
<dbReference type="GO" id="GO:0004516">
    <property type="term" value="F:nicotinate phosphoribosyltransferase activity"/>
    <property type="evidence" value="ECO:0007669"/>
    <property type="project" value="UniProtKB-UniRule"/>
</dbReference>
<dbReference type="GO" id="GO:0034355">
    <property type="term" value="P:NAD biosynthetic process via the salvage pathway"/>
    <property type="evidence" value="ECO:0007669"/>
    <property type="project" value="TreeGrafter"/>
</dbReference>
<dbReference type="CDD" id="cd01401">
    <property type="entry name" value="PncB_like"/>
    <property type="match status" value="1"/>
</dbReference>
<dbReference type="Gene3D" id="3.20.140.10">
    <property type="entry name" value="nicotinate phosphoribosyltransferase"/>
    <property type="match status" value="1"/>
</dbReference>
<dbReference type="HAMAP" id="MF_00570">
    <property type="entry name" value="NAPRTase"/>
    <property type="match status" value="1"/>
</dbReference>
<dbReference type="InterPro" id="IPR041525">
    <property type="entry name" value="N/Namide_PRibTrfase"/>
</dbReference>
<dbReference type="InterPro" id="IPR040727">
    <property type="entry name" value="NAPRTase_N"/>
</dbReference>
<dbReference type="InterPro" id="IPR006406">
    <property type="entry name" value="Nic_PRibTrfase"/>
</dbReference>
<dbReference type="InterPro" id="IPR007229">
    <property type="entry name" value="Nic_PRibTrfase-Fam"/>
</dbReference>
<dbReference type="InterPro" id="IPR036068">
    <property type="entry name" value="Nicotinate_pribotase-like_C"/>
</dbReference>
<dbReference type="NCBIfam" id="TIGR01514">
    <property type="entry name" value="NAPRTase"/>
    <property type="match status" value="1"/>
</dbReference>
<dbReference type="NCBIfam" id="NF003704">
    <property type="entry name" value="PRK05321.1"/>
    <property type="match status" value="1"/>
</dbReference>
<dbReference type="PANTHER" id="PTHR11098">
    <property type="entry name" value="NICOTINATE PHOSPHORIBOSYLTRANSFERASE"/>
    <property type="match status" value="1"/>
</dbReference>
<dbReference type="PANTHER" id="PTHR11098:SF1">
    <property type="entry name" value="NICOTINATE PHOSPHORIBOSYLTRANSFERASE"/>
    <property type="match status" value="1"/>
</dbReference>
<dbReference type="Pfam" id="PF04095">
    <property type="entry name" value="NAPRTase"/>
    <property type="match status" value="1"/>
</dbReference>
<dbReference type="Pfam" id="PF17767">
    <property type="entry name" value="NAPRTase_N"/>
    <property type="match status" value="1"/>
</dbReference>
<dbReference type="PIRSF" id="PIRSF000484">
    <property type="entry name" value="NAPRT"/>
    <property type="match status" value="1"/>
</dbReference>
<dbReference type="SUPFAM" id="SSF51690">
    <property type="entry name" value="Nicotinate/Quinolinate PRTase C-terminal domain-like"/>
    <property type="match status" value="1"/>
</dbReference>
<dbReference type="SUPFAM" id="SSF54675">
    <property type="entry name" value="Nicotinate/Quinolinate PRTase N-terminal domain-like"/>
    <property type="match status" value="1"/>
</dbReference>
<protein>
    <recommendedName>
        <fullName evidence="1">Nicotinate phosphoribosyltransferase</fullName>
        <shortName evidence="1">NAPRTase</shortName>
        <ecNumber evidence="1">6.3.4.21</ecNumber>
    </recommendedName>
</protein>
<comment type="function">
    <text evidence="1">Catalyzes the synthesis of beta-nicotinate D-ribonucleotide from nicotinate and 5-phospho-D-ribose 1-phosphate at the expense of ATP.</text>
</comment>
<comment type="catalytic activity">
    <reaction evidence="1">
        <text>nicotinate + 5-phospho-alpha-D-ribose 1-diphosphate + ATP + H2O = nicotinate beta-D-ribonucleotide + ADP + phosphate + diphosphate</text>
        <dbReference type="Rhea" id="RHEA:36163"/>
        <dbReference type="ChEBI" id="CHEBI:15377"/>
        <dbReference type="ChEBI" id="CHEBI:30616"/>
        <dbReference type="ChEBI" id="CHEBI:32544"/>
        <dbReference type="ChEBI" id="CHEBI:33019"/>
        <dbReference type="ChEBI" id="CHEBI:43474"/>
        <dbReference type="ChEBI" id="CHEBI:57502"/>
        <dbReference type="ChEBI" id="CHEBI:58017"/>
        <dbReference type="ChEBI" id="CHEBI:456216"/>
        <dbReference type="EC" id="6.3.4.21"/>
    </reaction>
</comment>
<comment type="pathway">
    <text evidence="1">Cofactor biosynthesis; NAD(+) biosynthesis; nicotinate D-ribonucleotide from nicotinate: step 1/1.</text>
</comment>
<comment type="PTM">
    <text evidence="1">Transiently phosphorylated on a His residue during the reaction cycle. Phosphorylation strongly increases the affinity for substrates and increases the rate of nicotinate D-ribonucleotide production. Dephosphorylation regenerates the low-affinity form of the enzyme, leading to product release.</text>
</comment>
<comment type="similarity">
    <text evidence="1">Belongs to the NAPRTase family.</text>
</comment>
<gene>
    <name evidence="1" type="primary">pncB</name>
    <name type="ordered locus">Pput_4746</name>
</gene>
<evidence type="ECO:0000255" key="1">
    <source>
        <dbReference type="HAMAP-Rule" id="MF_00570"/>
    </source>
</evidence>
<feature type="chain" id="PRO_1000025006" description="Nicotinate phosphoribosyltransferase">
    <location>
        <begin position="1"/>
        <end position="401"/>
    </location>
</feature>
<feature type="modified residue" description="Phosphohistidine; by autocatalysis" evidence="1">
    <location>
        <position position="224"/>
    </location>
</feature>